<name>RL3_FRATN</name>
<protein>
    <recommendedName>
        <fullName evidence="1">Large ribosomal subunit protein uL3</fullName>
    </recommendedName>
    <alternativeName>
        <fullName evidence="3">50S ribosomal protein L3</fullName>
    </alternativeName>
</protein>
<organism>
    <name type="scientific">Francisella tularensis subsp. novicida (strain U112)</name>
    <dbReference type="NCBI Taxonomy" id="401614"/>
    <lineage>
        <taxon>Bacteria</taxon>
        <taxon>Pseudomonadati</taxon>
        <taxon>Pseudomonadota</taxon>
        <taxon>Gammaproteobacteria</taxon>
        <taxon>Thiotrichales</taxon>
        <taxon>Francisellaceae</taxon>
        <taxon>Francisella</taxon>
    </lineage>
</organism>
<dbReference type="EMBL" id="CP000439">
    <property type="protein sequence ID" value="ABK89148.1"/>
    <property type="molecule type" value="Genomic_DNA"/>
</dbReference>
<dbReference type="RefSeq" id="WP_003027202.1">
    <property type="nucleotide sequence ID" value="NZ_CP009633.1"/>
</dbReference>
<dbReference type="SMR" id="A0Q4I3"/>
<dbReference type="GeneID" id="75264261"/>
<dbReference type="KEGG" id="ftn:FTN_0239"/>
<dbReference type="KEGG" id="ftx:AW25_1803"/>
<dbReference type="BioCyc" id="FTUL401614:G1G75-250-MONOMER"/>
<dbReference type="Proteomes" id="UP000000762">
    <property type="component" value="Chromosome"/>
</dbReference>
<dbReference type="GO" id="GO:0022625">
    <property type="term" value="C:cytosolic large ribosomal subunit"/>
    <property type="evidence" value="ECO:0007669"/>
    <property type="project" value="TreeGrafter"/>
</dbReference>
<dbReference type="GO" id="GO:0019843">
    <property type="term" value="F:rRNA binding"/>
    <property type="evidence" value="ECO:0007669"/>
    <property type="project" value="UniProtKB-UniRule"/>
</dbReference>
<dbReference type="GO" id="GO:0003735">
    <property type="term" value="F:structural constituent of ribosome"/>
    <property type="evidence" value="ECO:0007669"/>
    <property type="project" value="InterPro"/>
</dbReference>
<dbReference type="GO" id="GO:0006412">
    <property type="term" value="P:translation"/>
    <property type="evidence" value="ECO:0007669"/>
    <property type="project" value="UniProtKB-UniRule"/>
</dbReference>
<dbReference type="FunFam" id="2.40.30.10:FF:000004">
    <property type="entry name" value="50S ribosomal protein L3"/>
    <property type="match status" value="1"/>
</dbReference>
<dbReference type="FunFam" id="3.30.160.810:FF:000001">
    <property type="entry name" value="50S ribosomal protein L3"/>
    <property type="match status" value="1"/>
</dbReference>
<dbReference type="Gene3D" id="3.30.160.810">
    <property type="match status" value="1"/>
</dbReference>
<dbReference type="Gene3D" id="2.40.30.10">
    <property type="entry name" value="Translation factors"/>
    <property type="match status" value="1"/>
</dbReference>
<dbReference type="HAMAP" id="MF_01325_B">
    <property type="entry name" value="Ribosomal_uL3_B"/>
    <property type="match status" value="1"/>
</dbReference>
<dbReference type="InterPro" id="IPR000597">
    <property type="entry name" value="Ribosomal_uL3"/>
</dbReference>
<dbReference type="InterPro" id="IPR019927">
    <property type="entry name" value="Ribosomal_uL3_bac/org-type"/>
</dbReference>
<dbReference type="InterPro" id="IPR019926">
    <property type="entry name" value="Ribosomal_uL3_CS"/>
</dbReference>
<dbReference type="InterPro" id="IPR009000">
    <property type="entry name" value="Transl_B-barrel_sf"/>
</dbReference>
<dbReference type="NCBIfam" id="TIGR03625">
    <property type="entry name" value="L3_bact"/>
    <property type="match status" value="1"/>
</dbReference>
<dbReference type="PANTHER" id="PTHR11229">
    <property type="entry name" value="50S RIBOSOMAL PROTEIN L3"/>
    <property type="match status" value="1"/>
</dbReference>
<dbReference type="PANTHER" id="PTHR11229:SF16">
    <property type="entry name" value="LARGE RIBOSOMAL SUBUNIT PROTEIN UL3C"/>
    <property type="match status" value="1"/>
</dbReference>
<dbReference type="Pfam" id="PF00297">
    <property type="entry name" value="Ribosomal_L3"/>
    <property type="match status" value="1"/>
</dbReference>
<dbReference type="SUPFAM" id="SSF50447">
    <property type="entry name" value="Translation proteins"/>
    <property type="match status" value="1"/>
</dbReference>
<dbReference type="PROSITE" id="PS00474">
    <property type="entry name" value="RIBOSOMAL_L3"/>
    <property type="match status" value="1"/>
</dbReference>
<keyword id="KW-0488">Methylation</keyword>
<keyword id="KW-0687">Ribonucleoprotein</keyword>
<keyword id="KW-0689">Ribosomal protein</keyword>
<keyword id="KW-0694">RNA-binding</keyword>
<keyword id="KW-0699">rRNA-binding</keyword>
<feature type="chain" id="PRO_1000052052" description="Large ribosomal subunit protein uL3">
    <location>
        <begin position="1"/>
        <end position="210"/>
    </location>
</feature>
<feature type="region of interest" description="Disordered" evidence="2">
    <location>
        <begin position="133"/>
        <end position="152"/>
    </location>
</feature>
<feature type="modified residue" description="N5-methylglutamine" evidence="1">
    <location>
        <position position="151"/>
    </location>
</feature>
<evidence type="ECO:0000255" key="1">
    <source>
        <dbReference type="HAMAP-Rule" id="MF_01325"/>
    </source>
</evidence>
<evidence type="ECO:0000256" key="2">
    <source>
        <dbReference type="SAM" id="MobiDB-lite"/>
    </source>
</evidence>
<evidence type="ECO:0000305" key="3"/>
<gene>
    <name evidence="1" type="primary">rplC</name>
    <name type="ordered locus">FTN_0239</name>
</gene>
<sequence length="210" mass="22307">MSLGLVGRKCGMTRIFTEDGVSIPVTVVQVEPNKVTQVKTVEKDGYNAIQVTTGFKKRSNVNKPMAGHYAKASVEPGRGLWEFTVDAAAEYQVGSSFDATMFEAGQKVDVRGVSKGKGFQGGVKRHNFATQDATHGNSLSHRVHGSTGQNQTPGRVFKNKKMAGHLGNENVTIQSLEVVRVDAENGLLLLKGGIPGSVGGDIIVTPAVKS</sequence>
<accession>A0Q4I3</accession>
<proteinExistence type="inferred from homology"/>
<comment type="function">
    <text evidence="1">One of the primary rRNA binding proteins, it binds directly near the 3'-end of the 23S rRNA, where it nucleates assembly of the 50S subunit.</text>
</comment>
<comment type="subunit">
    <text evidence="1">Part of the 50S ribosomal subunit. Forms a cluster with proteins L14 and L19.</text>
</comment>
<comment type="PTM">
    <text evidence="1">Methylated by PrmB.</text>
</comment>
<comment type="similarity">
    <text evidence="1">Belongs to the universal ribosomal protein uL3 family.</text>
</comment>
<reference key="1">
    <citation type="journal article" date="2007" name="Genome Biol.">
        <title>Comparison of Francisella tularensis genomes reveals evolutionary events associated with the emergence of human pathogenic strains.</title>
        <authorList>
            <person name="Rohmer L."/>
            <person name="Fong C."/>
            <person name="Abmayr S."/>
            <person name="Wasnick M."/>
            <person name="Larson Freeman T.J."/>
            <person name="Radey M."/>
            <person name="Guina T."/>
            <person name="Svensson K."/>
            <person name="Hayden H.S."/>
            <person name="Jacobs M."/>
            <person name="Gallagher L.A."/>
            <person name="Manoil C."/>
            <person name="Ernst R.K."/>
            <person name="Drees B."/>
            <person name="Buckley D."/>
            <person name="Haugen E."/>
            <person name="Bovee D."/>
            <person name="Zhou Y."/>
            <person name="Chang J."/>
            <person name="Levy R."/>
            <person name="Lim R."/>
            <person name="Gillett W."/>
            <person name="Guenthener D."/>
            <person name="Kang A."/>
            <person name="Shaffer S.A."/>
            <person name="Taylor G."/>
            <person name="Chen J."/>
            <person name="Gallis B."/>
            <person name="D'Argenio D.A."/>
            <person name="Forsman M."/>
            <person name="Olson M.V."/>
            <person name="Goodlett D.R."/>
            <person name="Kaul R."/>
            <person name="Miller S.I."/>
            <person name="Brittnacher M.J."/>
        </authorList>
    </citation>
    <scope>NUCLEOTIDE SEQUENCE [LARGE SCALE GENOMIC DNA]</scope>
    <source>
        <strain>U112</strain>
    </source>
</reference>